<organism>
    <name type="scientific">Escherichia coli O157:H7</name>
    <dbReference type="NCBI Taxonomy" id="83334"/>
    <lineage>
        <taxon>Bacteria</taxon>
        <taxon>Pseudomonadati</taxon>
        <taxon>Pseudomonadota</taxon>
        <taxon>Gammaproteobacteria</taxon>
        <taxon>Enterobacterales</taxon>
        <taxon>Enterobacteriaceae</taxon>
        <taxon>Escherichia</taxon>
    </lineage>
</organism>
<reference key="1">
    <citation type="journal article" date="2001" name="Nature">
        <title>Genome sequence of enterohaemorrhagic Escherichia coli O157:H7.</title>
        <authorList>
            <person name="Perna N.T."/>
            <person name="Plunkett G. III"/>
            <person name="Burland V."/>
            <person name="Mau B."/>
            <person name="Glasner J.D."/>
            <person name="Rose D.J."/>
            <person name="Mayhew G.F."/>
            <person name="Evans P.S."/>
            <person name="Gregor J."/>
            <person name="Kirkpatrick H.A."/>
            <person name="Posfai G."/>
            <person name="Hackett J."/>
            <person name="Klink S."/>
            <person name="Boutin A."/>
            <person name="Shao Y."/>
            <person name="Miller L."/>
            <person name="Grotbeck E.J."/>
            <person name="Davis N.W."/>
            <person name="Lim A."/>
            <person name="Dimalanta E.T."/>
            <person name="Potamousis K."/>
            <person name="Apodaca J."/>
            <person name="Anantharaman T.S."/>
            <person name="Lin J."/>
            <person name="Yen G."/>
            <person name="Schwartz D.C."/>
            <person name="Welch R.A."/>
            <person name="Blattner F.R."/>
        </authorList>
    </citation>
    <scope>NUCLEOTIDE SEQUENCE [LARGE SCALE GENOMIC DNA]</scope>
    <source>
        <strain>O157:H7 / EDL933 / ATCC 700927 / EHEC</strain>
    </source>
</reference>
<reference key="2">
    <citation type="journal article" date="2001" name="DNA Res.">
        <title>Complete genome sequence of enterohemorrhagic Escherichia coli O157:H7 and genomic comparison with a laboratory strain K-12.</title>
        <authorList>
            <person name="Hayashi T."/>
            <person name="Makino K."/>
            <person name="Ohnishi M."/>
            <person name="Kurokawa K."/>
            <person name="Ishii K."/>
            <person name="Yokoyama K."/>
            <person name="Han C.-G."/>
            <person name="Ohtsubo E."/>
            <person name="Nakayama K."/>
            <person name="Murata T."/>
            <person name="Tanaka M."/>
            <person name="Tobe T."/>
            <person name="Iida T."/>
            <person name="Takami H."/>
            <person name="Honda T."/>
            <person name="Sasakawa C."/>
            <person name="Ogasawara N."/>
            <person name="Yasunaga T."/>
            <person name="Kuhara S."/>
            <person name="Shiba T."/>
            <person name="Hattori M."/>
            <person name="Shinagawa H."/>
        </authorList>
    </citation>
    <scope>NUCLEOTIDE SEQUENCE [LARGE SCALE GENOMIC DNA]</scope>
    <source>
        <strain>O157:H7 / Sakai / RIMD 0509952 / EHEC</strain>
    </source>
</reference>
<accession>P0A7Q7</accession>
<accession>P21194</accession>
<sequence length="38" mass="4364">MKVRASVKKLCRNCKIVKRDGVIRVICSAEPKHKQRQG</sequence>
<dbReference type="EMBL" id="AE005174">
    <property type="protein sequence ID" value="AAG58420.1"/>
    <property type="molecule type" value="Genomic_DNA"/>
</dbReference>
<dbReference type="EMBL" id="BA000007">
    <property type="protein sequence ID" value="BAB37587.1"/>
    <property type="molecule type" value="Genomic_DNA"/>
</dbReference>
<dbReference type="PIR" id="D91149">
    <property type="entry name" value="D91149"/>
</dbReference>
<dbReference type="PIR" id="H85994">
    <property type="entry name" value="H85994"/>
</dbReference>
<dbReference type="RefSeq" id="NP_312191.1">
    <property type="nucleotide sequence ID" value="NC_002695.1"/>
</dbReference>
<dbReference type="RefSeq" id="WP_000868187.1">
    <property type="nucleotide sequence ID" value="NZ_VOAI01000041.1"/>
</dbReference>
<dbReference type="SMR" id="P0A7Q7"/>
<dbReference type="STRING" id="155864.Z4669"/>
<dbReference type="GeneID" id="915980"/>
<dbReference type="GeneID" id="98390421"/>
<dbReference type="KEGG" id="ece:Z4669"/>
<dbReference type="KEGG" id="ecs:ECs_4164"/>
<dbReference type="PATRIC" id="fig|386585.9.peg.4347"/>
<dbReference type="eggNOG" id="COG0257">
    <property type="taxonomic scope" value="Bacteria"/>
</dbReference>
<dbReference type="HOGENOM" id="CLU_135723_6_2_6"/>
<dbReference type="Proteomes" id="UP000000558">
    <property type="component" value="Chromosome"/>
</dbReference>
<dbReference type="Proteomes" id="UP000002519">
    <property type="component" value="Chromosome"/>
</dbReference>
<dbReference type="GO" id="GO:0005737">
    <property type="term" value="C:cytoplasm"/>
    <property type="evidence" value="ECO:0007669"/>
    <property type="project" value="UniProtKB-ARBA"/>
</dbReference>
<dbReference type="GO" id="GO:1990904">
    <property type="term" value="C:ribonucleoprotein complex"/>
    <property type="evidence" value="ECO:0007669"/>
    <property type="project" value="UniProtKB-KW"/>
</dbReference>
<dbReference type="GO" id="GO:0005840">
    <property type="term" value="C:ribosome"/>
    <property type="evidence" value="ECO:0007669"/>
    <property type="project" value="UniProtKB-KW"/>
</dbReference>
<dbReference type="GO" id="GO:0003735">
    <property type="term" value="F:structural constituent of ribosome"/>
    <property type="evidence" value="ECO:0007669"/>
    <property type="project" value="InterPro"/>
</dbReference>
<dbReference type="GO" id="GO:0006412">
    <property type="term" value="P:translation"/>
    <property type="evidence" value="ECO:0007669"/>
    <property type="project" value="UniProtKB-UniRule"/>
</dbReference>
<dbReference type="HAMAP" id="MF_00251">
    <property type="entry name" value="Ribosomal_bL36"/>
    <property type="match status" value="1"/>
</dbReference>
<dbReference type="InterPro" id="IPR000473">
    <property type="entry name" value="Ribosomal_bL36"/>
</dbReference>
<dbReference type="InterPro" id="IPR035977">
    <property type="entry name" value="Ribosomal_bL36_sp"/>
</dbReference>
<dbReference type="NCBIfam" id="TIGR01022">
    <property type="entry name" value="rpmJ_bact"/>
    <property type="match status" value="1"/>
</dbReference>
<dbReference type="PANTHER" id="PTHR42888">
    <property type="entry name" value="50S RIBOSOMAL PROTEIN L36, CHLOROPLASTIC"/>
    <property type="match status" value="1"/>
</dbReference>
<dbReference type="PANTHER" id="PTHR42888:SF1">
    <property type="entry name" value="LARGE RIBOSOMAL SUBUNIT PROTEIN BL36C"/>
    <property type="match status" value="1"/>
</dbReference>
<dbReference type="Pfam" id="PF00444">
    <property type="entry name" value="Ribosomal_L36"/>
    <property type="match status" value="1"/>
</dbReference>
<dbReference type="SUPFAM" id="SSF57840">
    <property type="entry name" value="Ribosomal protein L36"/>
    <property type="match status" value="1"/>
</dbReference>
<dbReference type="PROSITE" id="PS00828">
    <property type="entry name" value="RIBOSOMAL_L36"/>
    <property type="match status" value="1"/>
</dbReference>
<name>RL36_ECO57</name>
<feature type="chain" id="PRO_0000126184" description="Large ribosomal subunit protein bL36">
    <location>
        <begin position="1"/>
        <end position="38"/>
    </location>
</feature>
<evidence type="ECO:0000305" key="1"/>
<comment type="similarity">
    <text evidence="1">Belongs to the bacterial ribosomal protein bL36 family.</text>
</comment>
<keyword id="KW-1185">Reference proteome</keyword>
<keyword id="KW-0687">Ribonucleoprotein</keyword>
<keyword id="KW-0689">Ribosomal protein</keyword>
<protein>
    <recommendedName>
        <fullName evidence="1">Large ribosomal subunit protein bL36</fullName>
    </recommendedName>
    <alternativeName>
        <fullName>50S ribosomal protein L36</fullName>
    </alternativeName>
</protein>
<proteinExistence type="inferred from homology"/>
<gene>
    <name type="primary">rpmJ</name>
    <name type="ordered locus">Z4669</name>
    <name type="ordered locus">ECs4164</name>
</gene>